<dbReference type="EMBL" id="X54640">
    <property type="protein sequence ID" value="CAA38452.1"/>
    <property type="molecule type" value="mRNA"/>
</dbReference>
<dbReference type="EMBL" id="X67215">
    <property type="protein sequence ID" value="CAA47655.1"/>
    <property type="molecule type" value="mRNA"/>
</dbReference>
<dbReference type="EMBL" id="AY120888">
    <property type="protein sequence ID" value="AAM81604.1"/>
    <property type="molecule type" value="mRNA"/>
</dbReference>
<dbReference type="PIR" id="S15674">
    <property type="entry name" value="S15674"/>
</dbReference>
<dbReference type="RefSeq" id="NP_001103352.1">
    <molecule id="P26453-1"/>
    <property type="nucleotide sequence ID" value="NM_001109882.1"/>
</dbReference>
<dbReference type="RefSeq" id="NP_036915.1">
    <molecule id="P26453-2"/>
    <property type="nucleotide sequence ID" value="NM_012783.3"/>
</dbReference>
<dbReference type="SMR" id="P26453"/>
<dbReference type="BioGRID" id="247286">
    <property type="interactions" value="1"/>
</dbReference>
<dbReference type="FunCoup" id="P26453">
    <property type="interactions" value="1022"/>
</dbReference>
<dbReference type="IntAct" id="P26453">
    <property type="interactions" value="2"/>
</dbReference>
<dbReference type="STRING" id="10116.ENSRNOP00000011275"/>
<dbReference type="GlyCosmos" id="P26453">
    <property type="glycosylation" value="3 sites, 5 glycans"/>
</dbReference>
<dbReference type="GlyGen" id="P26453">
    <property type="glycosylation" value="3 sites, 5 N-linked glycans (1 site)"/>
</dbReference>
<dbReference type="iPTMnet" id="P26453"/>
<dbReference type="PhosphoSitePlus" id="P26453"/>
<dbReference type="SwissPalm" id="P26453"/>
<dbReference type="jPOST" id="P26453"/>
<dbReference type="PaxDb" id="10116-ENSRNOP00000011275"/>
<dbReference type="Ensembl" id="ENSRNOT00000011275.9">
    <molecule id="P26453-1"/>
    <property type="protein sequence ID" value="ENSRNOP00000011275.5"/>
    <property type="gene ID" value="ENSRNOG00000008414.9"/>
</dbReference>
<dbReference type="Ensembl" id="ENSRNOT00000044275.4">
    <molecule id="P26453-2"/>
    <property type="protein sequence ID" value="ENSRNOP00000050252.3"/>
    <property type="gene ID" value="ENSRNOG00000008414.9"/>
</dbReference>
<dbReference type="GeneID" id="25246"/>
<dbReference type="KEGG" id="rno:25246"/>
<dbReference type="UCSC" id="RGD:2220">
    <molecule id="P26453-1"/>
    <property type="organism name" value="rat"/>
</dbReference>
<dbReference type="AGR" id="RGD:2220"/>
<dbReference type="CTD" id="682"/>
<dbReference type="RGD" id="2220">
    <property type="gene designation" value="Bsg"/>
</dbReference>
<dbReference type="eggNOG" id="ENOG502QPKN">
    <property type="taxonomic scope" value="Eukaryota"/>
</dbReference>
<dbReference type="GeneTree" id="ENSGT00940000159142"/>
<dbReference type="HOGENOM" id="CLU_058449_0_0_1"/>
<dbReference type="InParanoid" id="P26453"/>
<dbReference type="OMA" id="TITGHKW"/>
<dbReference type="OrthoDB" id="84504at9989"/>
<dbReference type="PhylomeDB" id="P26453"/>
<dbReference type="Reactome" id="R-RNO-1474228">
    <property type="pathway name" value="Degradation of the extracellular matrix"/>
</dbReference>
<dbReference type="Reactome" id="R-RNO-210991">
    <property type="pathway name" value="Basigin interactions"/>
</dbReference>
<dbReference type="Reactome" id="R-RNO-216083">
    <property type="pathway name" value="Integrin cell surface interactions"/>
</dbReference>
<dbReference type="Reactome" id="R-RNO-433692">
    <property type="pathway name" value="Proton-coupled monocarboxylate transport"/>
</dbReference>
<dbReference type="Reactome" id="R-RNO-9749641">
    <property type="pathway name" value="Aspirin ADME"/>
</dbReference>
<dbReference type="PRO" id="PR:P26453"/>
<dbReference type="Proteomes" id="UP000002494">
    <property type="component" value="Chromosome 7"/>
</dbReference>
<dbReference type="Bgee" id="ENSRNOG00000008414">
    <property type="expression patterns" value="Expressed in adult mammalian kidney and 19 other cell types or tissues"/>
</dbReference>
<dbReference type="ExpressionAtlas" id="P26453">
    <property type="expression patterns" value="baseline and differential"/>
</dbReference>
<dbReference type="GO" id="GO:0002080">
    <property type="term" value="C:acrosomal membrane"/>
    <property type="evidence" value="ECO:0000266"/>
    <property type="project" value="RGD"/>
</dbReference>
<dbReference type="GO" id="GO:0030424">
    <property type="term" value="C:axon"/>
    <property type="evidence" value="ECO:0000318"/>
    <property type="project" value="GO_Central"/>
</dbReference>
<dbReference type="GO" id="GO:0016323">
    <property type="term" value="C:basolateral plasma membrane"/>
    <property type="evidence" value="ECO:0007669"/>
    <property type="project" value="UniProtKB-SubCell"/>
</dbReference>
<dbReference type="GO" id="GO:0005789">
    <property type="term" value="C:endoplasmic reticulum membrane"/>
    <property type="evidence" value="ECO:0007669"/>
    <property type="project" value="UniProtKB-SubCell"/>
</dbReference>
<dbReference type="GO" id="GO:0001917">
    <property type="term" value="C:photoreceptor inner segment"/>
    <property type="evidence" value="ECO:0000250"/>
    <property type="project" value="UniProtKB"/>
</dbReference>
<dbReference type="GO" id="GO:0001750">
    <property type="term" value="C:photoreceptor outer segment"/>
    <property type="evidence" value="ECO:0000250"/>
    <property type="project" value="UniProtKB"/>
</dbReference>
<dbReference type="GO" id="GO:0005886">
    <property type="term" value="C:plasma membrane"/>
    <property type="evidence" value="ECO:0000314"/>
    <property type="project" value="UniProtKB"/>
</dbReference>
<dbReference type="GO" id="GO:0042383">
    <property type="term" value="C:sarcolemma"/>
    <property type="evidence" value="ECO:0000314"/>
    <property type="project" value="RGD"/>
</dbReference>
<dbReference type="GO" id="GO:0098632">
    <property type="term" value="F:cell-cell adhesion mediator activity"/>
    <property type="evidence" value="ECO:0000318"/>
    <property type="project" value="GO_Central"/>
</dbReference>
<dbReference type="GO" id="GO:0005537">
    <property type="term" value="F:D-mannose binding"/>
    <property type="evidence" value="ECO:0007669"/>
    <property type="project" value="UniProtKB-KW"/>
</dbReference>
<dbReference type="GO" id="GO:0038023">
    <property type="term" value="F:signaling receptor activity"/>
    <property type="evidence" value="ECO:0000250"/>
    <property type="project" value="UniProtKB"/>
</dbReference>
<dbReference type="GO" id="GO:0007411">
    <property type="term" value="P:axon guidance"/>
    <property type="evidence" value="ECO:0000318"/>
    <property type="project" value="GO_Central"/>
</dbReference>
<dbReference type="GO" id="GO:0046697">
    <property type="term" value="P:decidualization"/>
    <property type="evidence" value="ECO:0000270"/>
    <property type="project" value="RGD"/>
</dbReference>
<dbReference type="GO" id="GO:0070593">
    <property type="term" value="P:dendrite self-avoidance"/>
    <property type="evidence" value="ECO:0000318"/>
    <property type="project" value="GO_Central"/>
</dbReference>
<dbReference type="GO" id="GO:0007566">
    <property type="term" value="P:embryo implantation"/>
    <property type="evidence" value="ECO:0000270"/>
    <property type="project" value="RGD"/>
</dbReference>
<dbReference type="GO" id="GO:0061154">
    <property type="term" value="P:endothelial tube morphogenesis"/>
    <property type="evidence" value="ECO:0000250"/>
    <property type="project" value="UniProtKB"/>
</dbReference>
<dbReference type="GO" id="GO:0007156">
    <property type="term" value="P:homophilic cell adhesion via plasma membrane adhesion molecules"/>
    <property type="evidence" value="ECO:0000318"/>
    <property type="project" value="GO_Central"/>
</dbReference>
<dbReference type="GO" id="GO:0003407">
    <property type="term" value="P:neural retina development"/>
    <property type="evidence" value="ECO:0000250"/>
    <property type="project" value="UniProtKB"/>
</dbReference>
<dbReference type="GO" id="GO:0030593">
    <property type="term" value="P:neutrophil chemotaxis"/>
    <property type="evidence" value="ECO:0000266"/>
    <property type="project" value="RGD"/>
</dbReference>
<dbReference type="GO" id="GO:0042475">
    <property type="term" value="P:odontogenesis of dentin-containing tooth"/>
    <property type="evidence" value="ECO:0000270"/>
    <property type="project" value="RGD"/>
</dbReference>
<dbReference type="GO" id="GO:0045494">
    <property type="term" value="P:photoreceptor cell maintenance"/>
    <property type="evidence" value="ECO:0000250"/>
    <property type="project" value="UniProtKB"/>
</dbReference>
<dbReference type="GO" id="GO:0010595">
    <property type="term" value="P:positive regulation of endothelial cell migration"/>
    <property type="evidence" value="ECO:0000250"/>
    <property type="project" value="UniProtKB"/>
</dbReference>
<dbReference type="GO" id="GO:0010575">
    <property type="term" value="P:positive regulation of vascular endothelial growth factor production"/>
    <property type="evidence" value="ECO:0000250"/>
    <property type="project" value="UniProtKB"/>
</dbReference>
<dbReference type="GO" id="GO:0072659">
    <property type="term" value="P:protein localization to plasma membrane"/>
    <property type="evidence" value="ECO:0000315"/>
    <property type="project" value="UniProtKB"/>
</dbReference>
<dbReference type="GO" id="GO:0051591">
    <property type="term" value="P:response to cAMP"/>
    <property type="evidence" value="ECO:0000270"/>
    <property type="project" value="RGD"/>
</dbReference>
<dbReference type="GO" id="GO:0046689">
    <property type="term" value="P:response to mercury ion"/>
    <property type="evidence" value="ECO:0000270"/>
    <property type="project" value="RGD"/>
</dbReference>
<dbReference type="GO" id="GO:0043434">
    <property type="term" value="P:response to peptide hormone"/>
    <property type="evidence" value="ECO:0000270"/>
    <property type="project" value="RGD"/>
</dbReference>
<dbReference type="GO" id="GO:0007283">
    <property type="term" value="P:spermatogenesis"/>
    <property type="evidence" value="ECO:0000250"/>
    <property type="project" value="UniProtKB"/>
</dbReference>
<dbReference type="FunFam" id="2.60.40.10:FF:001329">
    <property type="entry name" value="Basigin"/>
    <property type="match status" value="1"/>
</dbReference>
<dbReference type="FunFam" id="2.60.40.10:FF:000291">
    <property type="entry name" value="Neuroplastin b"/>
    <property type="match status" value="1"/>
</dbReference>
<dbReference type="FunFam" id="2.60.40.10:FF:000387">
    <property type="entry name" value="Neuroplastin b"/>
    <property type="match status" value="1"/>
</dbReference>
<dbReference type="Gene3D" id="2.60.40.10">
    <property type="entry name" value="Immunoglobulins"/>
    <property type="match status" value="3"/>
</dbReference>
<dbReference type="InterPro" id="IPR007110">
    <property type="entry name" value="Ig-like_dom"/>
</dbReference>
<dbReference type="InterPro" id="IPR036179">
    <property type="entry name" value="Ig-like_dom_sf"/>
</dbReference>
<dbReference type="InterPro" id="IPR013783">
    <property type="entry name" value="Ig-like_fold"/>
</dbReference>
<dbReference type="InterPro" id="IPR003599">
    <property type="entry name" value="Ig_sub"/>
</dbReference>
<dbReference type="InterPro" id="IPR003598">
    <property type="entry name" value="Ig_sub2"/>
</dbReference>
<dbReference type="PANTHER" id="PTHR10075:SF107">
    <property type="entry name" value="BASIGIN"/>
    <property type="match status" value="1"/>
</dbReference>
<dbReference type="PANTHER" id="PTHR10075">
    <property type="entry name" value="BASIGIN RELATED"/>
    <property type="match status" value="1"/>
</dbReference>
<dbReference type="Pfam" id="PF13927">
    <property type="entry name" value="Ig_3"/>
    <property type="match status" value="2"/>
</dbReference>
<dbReference type="SMART" id="SM00409">
    <property type="entry name" value="IG"/>
    <property type="match status" value="2"/>
</dbReference>
<dbReference type="SMART" id="SM00408">
    <property type="entry name" value="IGc2"/>
    <property type="match status" value="2"/>
</dbReference>
<dbReference type="SUPFAM" id="SSF48726">
    <property type="entry name" value="Immunoglobulin"/>
    <property type="match status" value="3"/>
</dbReference>
<dbReference type="PROSITE" id="PS50835">
    <property type="entry name" value="IG_LIKE"/>
    <property type="match status" value="3"/>
</dbReference>
<proteinExistence type="evidence at protein level"/>
<accession>P26453</accession>
<accession>Q7TNP1</accession>
<comment type="function">
    <molecule>Isoform 1</molecule>
    <text evidence="3">Essential for normal retinal maturation and development (By similarity). Acts as a retinal cell surface receptor for NXNL1 and plays an important role in NXNL1-mediated survival of retinal cone photoreceptors (By similarity). In association with glucose transporter SLC16A1/GLUT1 and NXNL1, promotes retinal cone survival by enhancing aerobic glycolysis and accelerating the entry of glucose into photoreceptors (By similarity).</text>
</comment>
<comment type="function">
    <molecule>Isoform 2</molecule>
    <text evidence="3 4 8">Signaling receptor for cyclophilins, essential for PPIA/CYPA and PPIB/CYPB-dependent signaling related to chemotaxis and adhesion of immune cells (By similarity). Plays an important role in targeting the monocarboxylate transporters SLC16A1/GLUT1 and SLC16A3 to the plasma membrane (PubMed:10921872). Acts as a coreceptor for vascular endothelial growth factor receptor 2 (KDR/VEGFR2) in endothelial cells enhancing its VEGFA-mediated activation and downstream signaling (By similarity). Promotes angiogenesis through EPAS1/HIF2A-mediated up-regulation of VEGFA and KDR/VEGFR2 in endothelial cells (By similarity). Plays an important role in spermatogenesis; mediates interactions between germ cells and Sertoli cell and is essential for the development/differentiation of germ cells to round spermatids (By similarity).</text>
</comment>
<comment type="subunit">
    <molecule>Isoform 1</molecule>
    <text evidence="2 4">Homooligomer (By similarity). Interacts with NXNL1, SLC2A1 and SLC16A1/GLUT1 (By similarity). Interacts with XKR8; promoting its localization at the cell membrane (By similarity).</text>
</comment>
<comment type="subunit">
    <molecule>Isoform 2</molecule>
    <text evidence="3 4 8 9 17">Homooligomer (Probable). Interacts with SLC16A1; interaction mediates SLC16A1 targeting to the plasma membrane (PubMed:10921872). Interacts with SLC16A3; interaction mediates SLC16A3 targeting to the plasma membrane (PubMed:11719518). Interacts with VEGFA, KDR/VEGFR2, PPIA/CYPA, SLC16A12, SLC16A11, ATP1B2, MAG, L1CAM and AJAP1 (By similarity). Interacts with PPIL2; regulates BSG transport to the cell membrane (By similarity).</text>
</comment>
<comment type="subunit">
    <text evidence="12">Interacts with SLC16A6; this interaction mediates targeting to the plasma membrane.</text>
</comment>
<comment type="subcellular location">
    <molecule>Isoform 1</molecule>
    <subcellularLocation>
        <location evidence="4">Cell membrane</location>
        <topology evidence="14">Single-pass type I membrane protein</topology>
    </subcellularLocation>
    <subcellularLocation>
        <location evidence="3">Photoreceptor inner segment</location>
    </subcellularLocation>
    <subcellularLocation>
        <location evidence="3">Cell projection</location>
        <location evidence="3">Cilium</location>
        <location evidence="3">Photoreceptor outer segment</location>
    </subcellularLocation>
</comment>
<comment type="subcellular location">
    <molecule>Isoform 2</molecule>
    <subcellularLocation>
        <location evidence="9">Cell membrane</location>
        <topology evidence="14">Single-pass type I membrane protein</topology>
    </subcellularLocation>
    <subcellularLocation>
        <location evidence="4">Endoplasmic reticulum membrane</location>
        <topology evidence="14">Single-pass type I membrane protein</topology>
    </subcellularLocation>
    <subcellularLocation>
        <location evidence="4">Basolateral cell membrane</location>
        <topology evidence="14">Single-pass type I membrane protein</topology>
    </subcellularLocation>
</comment>
<comment type="alternative products">
    <event type="alternative splicing"/>
    <isoform>
        <id>P26453-1</id>
        <name>1</name>
        <name>Basigin-2</name>
        <sequence type="displayed"/>
    </isoform>
    <isoform>
        <id>P26453-2</id>
        <name>2</name>
        <sequence type="described" ref="VSP_011503"/>
    </isoform>
</comment>
<comment type="tissue specificity">
    <molecule>Isoform 2</molecule>
    <text evidence="11 13">Expressed in the skeletal muscle, liver, small intestine, kidney, testis, brain, heart and spleen (PubMed:8425897). Also present in various immature cells and endothelia (PubMed:2009910).</text>
</comment>
<comment type="developmental stage">
    <text evidence="10">In uterus during peri-implantation period strongly expressed in the luminal epithelium on day 1 of pregnancy and gradually decreased to a basal concentration from day 3 to day 5 of pregnancy. Strongly expressed in the implanting blastocyst and primary decidua on day 6 of pregnancy.</text>
</comment>
<comment type="induction">
    <text evidence="10">By activation of lymphocytes by mitogens. By estrogen in the uterine epithelium of ovariectomized animals.</text>
</comment>
<keyword id="KW-0025">Alternative splicing</keyword>
<keyword id="KW-1003">Cell membrane</keyword>
<keyword id="KW-0966">Cell projection</keyword>
<keyword id="KW-0221">Differentiation</keyword>
<keyword id="KW-0903">Direct protein sequencing</keyword>
<keyword id="KW-1015">Disulfide bond</keyword>
<keyword id="KW-0256">Endoplasmic reticulum</keyword>
<keyword id="KW-0325">Glycoprotein</keyword>
<keyword id="KW-0393">Immunoglobulin domain</keyword>
<keyword id="KW-0430">Lectin</keyword>
<keyword id="KW-0465">Mannose-binding</keyword>
<keyword id="KW-0472">Membrane</keyword>
<keyword id="KW-0597">Phosphoprotein</keyword>
<keyword id="KW-0675">Receptor</keyword>
<keyword id="KW-1185">Reference proteome</keyword>
<keyword id="KW-0732">Signal</keyword>
<keyword id="KW-0744">Spermatogenesis</keyword>
<keyword id="KW-0812">Transmembrane</keyword>
<keyword id="KW-1133">Transmembrane helix</keyword>
<reference key="1">
    <citation type="journal article" date="1991" name="Eur. J. Immunol.">
        <title>The MRC OX-47 antigen is a member of the immunoglobulin superfamily with an unusual transmembrane sequence.</title>
        <authorList>
            <person name="Fossum S."/>
            <person name="Mallet S."/>
            <person name="Barclay A.N."/>
        </authorList>
    </citation>
    <scope>NUCLEOTIDE SEQUENCE [MRNA] (ISOFORM 2)</scope>
    <scope>TISSUE SPECIFICITY (ISOFORM 2)</scope>
    <source>
        <strain>PVG X DA</strain>
    </source>
</reference>
<reference key="2">
    <citation type="journal article" date="1993" name="J. Cell Biol.">
        <title>Breaching the diffusion barrier that compartmentalizes the transmembrane glycoprotein CE9 to the posterior-tail plasma membrane domain of the rat spermatozoon.</title>
        <authorList>
            <person name="Nehme C.L."/>
            <person name="Cesario M.M."/>
            <person name="Myles D.G."/>
            <person name="Koppel D.E."/>
            <person name="Bartles J.R."/>
        </authorList>
    </citation>
    <scope>NUCLEOTIDE SEQUENCE [MRNA] (ISOFORM 2)</scope>
    <scope>SUBCELLULAR LOCATION (ISOFORM 2)</scope>
    <scope>TISSUE SPECIFICITY (ISOFORM 2)</scope>
    <source>
        <strain>Sprague-Dawley</strain>
        <tissue>Liver</tissue>
    </source>
</reference>
<reference key="3">
    <citation type="journal article" date="2003" name="Invest. Ophthalmol. Vis. Sci.">
        <title>Retina-specific expression of 5A11/Basigin-2, a member of the immunoglobulin gene superfamily.</title>
        <authorList>
            <person name="Ochrietor J.D."/>
            <person name="Moroz T.P."/>
            <person name="van Ekeris L."/>
            <person name="Clamp M.F."/>
            <person name="Jefferson S.C."/>
            <person name="deCarvalho A.C."/>
            <person name="Fadool J.M."/>
            <person name="Wistow G."/>
            <person name="Muramatsu T."/>
            <person name="Linser P.J."/>
        </authorList>
    </citation>
    <scope>NUCLEOTIDE SEQUENCE [MRNA] (ISOFORM 1)</scope>
    <source>
        <strain>Sprague-Dawley</strain>
        <tissue>Retina</tissue>
    </source>
</reference>
<reference key="4">
    <citation type="submission" date="2007-09" db="UniProtKB">
        <authorList>
            <person name="Lubec G."/>
            <person name="Kang S.U."/>
            <person name="Lubec S."/>
        </authorList>
    </citation>
    <scope>PROTEIN SEQUENCE OF 177-222; 228-239; 244-276; 315-320 AND 352-369</scope>
    <scope>IDENTIFICATION BY MASS SPECTROMETRY</scope>
    <source>
        <strain>Sprague-Dawley</strain>
        <tissue>Brain</tissue>
    </source>
</reference>
<reference key="5">
    <citation type="journal article" date="2000" name="EMBO J.">
        <title>CD147 is tightly associated with lactate transporters MCT1 and MCT4 and facilitates their cell surface expression.</title>
        <authorList>
            <person name="Kirk P."/>
            <person name="Wilson M.C."/>
            <person name="Heddle C."/>
            <person name="Brown M.H."/>
            <person name="Barclay A.N."/>
            <person name="Halestrap A.P."/>
        </authorList>
    </citation>
    <scope>INTERACTION WITH SLC16A1 AND SLC16A3 (ISOFORM 2)</scope>
    <scope>FUNCTION (ISOFORM 2)</scope>
    <scope>SUBCELLULAR LOCATION (ISOFORM 2)</scope>
</reference>
<reference key="6">
    <citation type="journal article" date="2002" name="Reproduction">
        <title>Basigin expression and hormonal regulation in the rat uterus during the peri-implantation period.</title>
        <authorList>
            <person name="Xiao L.J."/>
            <person name="Diao H.L."/>
            <person name="Ma X.H."/>
            <person name="Ding N.Z."/>
            <person name="Kadomatsu K."/>
            <person name="Muramatsu T."/>
            <person name="Yang Z.M."/>
        </authorList>
    </citation>
    <scope>DEVELOPMENTAL STAGE</scope>
    <scope>INDUCTION</scope>
</reference>
<reference key="7">
    <citation type="journal article" date="2002" name="J. Biol. Chem.">
        <title>Fluorescence resonance energy transfer studies on the interaction between the lactate transporter MCT1 and CD147 provide information on the topology and stoichiometry of the complex in situ.</title>
        <authorList>
            <person name="Wilson M.C."/>
            <person name="Meredith D."/>
            <person name="Halestrap A.P."/>
        </authorList>
    </citation>
    <scope>INTERACTION WITH SLC16A1 (ISOFORM 2)</scope>
    <scope>SUBUNIT (ISOFORM 2)</scope>
    <scope>SUBCELLULAR LOCATION (ISOFORM 2)</scope>
    <scope>TOPOLOGY</scope>
</reference>
<reference key="8">
    <citation type="journal article" date="2012" name="Nat. Commun.">
        <title>Quantitative maps of protein phosphorylation sites across 14 different rat organs and tissues.</title>
        <authorList>
            <person name="Lundby A."/>
            <person name="Secher A."/>
            <person name="Lage K."/>
            <person name="Nordsborg N.B."/>
            <person name="Dmytriyev A."/>
            <person name="Lundby C."/>
            <person name="Olsen J.V."/>
        </authorList>
    </citation>
    <scope>PHOSPHORYLATION [LARGE SCALE ANALYSIS] AT THR-357 AND SER-371</scope>
    <scope>IDENTIFICATION BY MASS SPECTROMETRY [LARGE SCALE ANALYSIS]</scope>
</reference>
<reference key="9">
    <citation type="journal article" date="2013" name="J. Proteome Res.">
        <title>Site-specific glycan-peptide analysis for determination of N-glycoproteome heterogeneity.</title>
        <authorList>
            <person name="Parker B.L."/>
            <person name="Thaysen-Andersen M."/>
            <person name="Solis N."/>
            <person name="Scott N.E."/>
            <person name="Larsen M.R."/>
            <person name="Graham M.E."/>
            <person name="Packer N.H."/>
            <person name="Cordwell S.J."/>
        </authorList>
    </citation>
    <scope>GLYCOSYLATION [LARGE SCALE ANALYSIS] AT ASN-160</scope>
    <scope>IDENTIFICATION BY MASS SPECTROMETRY [LARGE SCALE ANALYSIS]</scope>
    <source>
        <tissue>Brain</tissue>
    </source>
</reference>
<reference key="10">
    <citation type="journal article" date="2022" name="J. Biol. Chem.">
        <title>Mammalian monocarboxylate transporter 7 (MCT7/Slc16a6) is a novel facilitative taurine transporter.</title>
        <authorList>
            <person name="Higuchi K."/>
            <person name="Sugiyama K."/>
            <person name="Tomabechi R."/>
            <person name="Kishimoto H."/>
            <person name="Inoue K."/>
        </authorList>
    </citation>
    <scope>INTERACTION WITH SLC16A6</scope>
</reference>
<protein>
    <recommendedName>
        <fullName>Basigin</fullName>
    </recommendedName>
    <alternativeName>
        <fullName>Glycoprotein CE9</fullName>
    </alternativeName>
    <alternativeName>
        <fullName>OX-47 antigen</fullName>
    </alternativeName>
    <cdAntigenName>CD147</cdAntigenName>
</protein>
<name>BASI_RAT</name>
<evidence type="ECO:0000250" key="1"/>
<evidence type="ECO:0000250" key="2">
    <source>
        <dbReference type="UniProtKB" id="P17790"/>
    </source>
</evidence>
<evidence type="ECO:0000250" key="3">
    <source>
        <dbReference type="UniProtKB" id="P18572"/>
    </source>
</evidence>
<evidence type="ECO:0000250" key="4">
    <source>
        <dbReference type="UniProtKB" id="P35613"/>
    </source>
</evidence>
<evidence type="ECO:0000255" key="5"/>
<evidence type="ECO:0000255" key="6">
    <source>
        <dbReference type="PROSITE-ProRule" id="PRU00114"/>
    </source>
</evidence>
<evidence type="ECO:0000256" key="7">
    <source>
        <dbReference type="SAM" id="MobiDB-lite"/>
    </source>
</evidence>
<evidence type="ECO:0000269" key="8">
    <source>
    </source>
</evidence>
<evidence type="ECO:0000269" key="9">
    <source>
    </source>
</evidence>
<evidence type="ECO:0000269" key="10">
    <source>
    </source>
</evidence>
<evidence type="ECO:0000269" key="11">
    <source>
    </source>
</evidence>
<evidence type="ECO:0000269" key="12">
    <source>
    </source>
</evidence>
<evidence type="ECO:0000269" key="13">
    <source>
    </source>
</evidence>
<evidence type="ECO:0000303" key="14">
    <source>
    </source>
</evidence>
<evidence type="ECO:0000303" key="15">
    <source>
    </source>
</evidence>
<evidence type="ECO:0000303" key="16">
    <source>
    </source>
</evidence>
<evidence type="ECO:0000305" key="17">
    <source>
    </source>
</evidence>
<evidence type="ECO:0007744" key="18">
    <source>
    </source>
</evidence>
<evidence type="ECO:0007744" key="19">
    <source>
    </source>
</evidence>
<feature type="signal peptide" evidence="5">
    <location>
        <begin position="1"/>
        <end position="22"/>
    </location>
</feature>
<feature type="chain" id="PRO_0000014521" description="Basigin">
    <location>
        <begin position="23"/>
        <end position="388"/>
    </location>
</feature>
<feature type="topological domain" description="Extracellular" evidence="17">
    <location>
        <begin position="23"/>
        <end position="326"/>
    </location>
</feature>
<feature type="transmembrane region" description="Helical" evidence="5">
    <location>
        <begin position="327"/>
        <end position="347"/>
    </location>
</feature>
<feature type="topological domain" description="Cytoplasmic" evidence="17">
    <location>
        <begin position="348"/>
        <end position="388"/>
    </location>
</feature>
<feature type="domain" description="Ig-like" evidence="6">
    <location>
        <begin position="37"/>
        <end position="120"/>
    </location>
</feature>
<feature type="domain" description="Ig-like C2-type" evidence="6">
    <location>
        <begin position="138"/>
        <end position="219"/>
    </location>
</feature>
<feature type="domain" description="Ig-like V-type" evidence="6">
    <location>
        <begin position="221"/>
        <end position="320"/>
    </location>
</feature>
<feature type="region of interest" description="Disordered" evidence="7">
    <location>
        <begin position="355"/>
        <end position="388"/>
    </location>
</feature>
<feature type="modified residue" description="Phosphothreonine" evidence="18">
    <location>
        <position position="357"/>
    </location>
</feature>
<feature type="modified residue" description="Phosphoserine" evidence="18">
    <location>
        <position position="371"/>
    </location>
</feature>
<feature type="glycosylation site" description="N-linked (GlcNAc...) asparagine" evidence="19">
    <location>
        <position position="160"/>
    </location>
</feature>
<feature type="glycosylation site" description="N-linked (GlcNAc...) asparagine" evidence="1">
    <location>
        <position position="269"/>
    </location>
</feature>
<feature type="glycosylation site" description="N-linked (GlcNAc...) asparagine" evidence="5">
    <location>
        <position position="305"/>
    </location>
</feature>
<feature type="disulfide bond" evidence="6">
    <location>
        <begin position="44"/>
        <end position="108"/>
    </location>
</feature>
<feature type="disulfide bond" evidence="6">
    <location>
        <begin position="157"/>
        <end position="203"/>
    </location>
</feature>
<feature type="disulfide bond" evidence="6">
    <location>
        <begin position="242"/>
        <end position="304"/>
    </location>
</feature>
<feature type="splice variant" id="VSP_011503" description="In isoform 2." evidence="15 16">
    <location>
        <begin position="25"/>
        <end position="140"/>
    </location>
</feature>
<gene>
    <name type="primary">Bsg</name>
</gene>
<sequence>MAAALLLALAFTFLSGQGACAAAGFLKAPMSQEQWAGGSVVLHCEAVGSPMPEIQWWFEGNEPNDSCSQLWDGARLDRVHIHATYRQHAASTLSVDGLAAEDTGTYECRASSDPDRNHLTRPPRVKWVRAQASVVVLEPGTIVTSVQEVDSKTQLTCFLNSSGIDIVGHRWMRGGKVLQEDTLPDLQMKYTVDADDRSGEYSCIFLPEPVGRGNINVEGPPRIKVGKKSEHASEGEFVKLICKSEASHPPVDEWVWFKTSDTGDQTISNGTEANSKYVIISTPELSELIISDLDMNVDPGTYVCNATNSQGSARETISLRVRSRLAALWPFLGIVAEVLVLVTIIFIYEKRRKPDQTLDEDDPGAAPLKGSGSHLNDKDKNVRQRNAT</sequence>
<organism>
    <name type="scientific">Rattus norvegicus</name>
    <name type="common">Rat</name>
    <dbReference type="NCBI Taxonomy" id="10116"/>
    <lineage>
        <taxon>Eukaryota</taxon>
        <taxon>Metazoa</taxon>
        <taxon>Chordata</taxon>
        <taxon>Craniata</taxon>
        <taxon>Vertebrata</taxon>
        <taxon>Euteleostomi</taxon>
        <taxon>Mammalia</taxon>
        <taxon>Eutheria</taxon>
        <taxon>Euarchontoglires</taxon>
        <taxon>Glires</taxon>
        <taxon>Rodentia</taxon>
        <taxon>Myomorpha</taxon>
        <taxon>Muroidea</taxon>
        <taxon>Muridae</taxon>
        <taxon>Murinae</taxon>
        <taxon>Rattus</taxon>
    </lineage>
</organism>